<gene>
    <name type="primary">mucA</name>
</gene>
<organism>
    <name type="scientific">Salmonella typhimurium</name>
    <dbReference type="NCBI Taxonomy" id="90371"/>
    <lineage>
        <taxon>Bacteria</taxon>
        <taxon>Pseudomonadati</taxon>
        <taxon>Pseudomonadota</taxon>
        <taxon>Gammaproteobacteria</taxon>
        <taxon>Enterobacterales</taxon>
        <taxon>Enterobacteriaceae</taxon>
        <taxon>Salmonella</taxon>
    </lineage>
</organism>
<accession>P0A275</accession>
<accession>P07376</accession>
<accession>P14302</accession>
<feature type="chain" id="PRO_0000041986" description="Protein MucA">
    <location>
        <begin position="1"/>
        <end position="146"/>
    </location>
</feature>
<feature type="chain" id="PRO_0000027301" description="Protein MucA'">
    <location>
        <begin position="27"/>
        <end position="146"/>
    </location>
</feature>
<feature type="active site" description="For autocatalytic cleavage activity" evidence="1">
    <location>
        <position position="62"/>
    </location>
</feature>
<feature type="active site" description="For autocatalytic cleavage activity" evidence="1">
    <location>
        <position position="99"/>
    </location>
</feature>
<feature type="site" description="Cleavage; by autolysis">
    <location>
        <begin position="26"/>
        <end position="27"/>
    </location>
</feature>
<proteinExistence type="inferred from homology"/>
<reference key="1">
    <citation type="submission" date="1989-09" db="EMBL/GenBank/DDBJ databases">
        <authorList>
            <person name="Hall R.M."/>
            <person name="Vockler C."/>
        </authorList>
    </citation>
    <scope>NUCLEOTIDE SEQUENCE [GENOMIC DNA]</scope>
</reference>
<geneLocation type="plasmid">
    <name>IncN R46</name>
</geneLocation>
<keyword id="KW-0068">Autocatalytic cleavage</keyword>
<keyword id="KW-0227">DNA damage</keyword>
<keyword id="KW-0234">DNA repair</keyword>
<keyword id="KW-0378">Hydrolase</keyword>
<keyword id="KW-0614">Plasmid</keyword>
<keyword id="KW-0645">Protease</keyword>
<keyword id="KW-0720">Serine protease</keyword>
<keyword id="KW-0741">SOS mutagenesis</keyword>
<keyword id="KW-0742">SOS response</keyword>
<evidence type="ECO:0000250" key="1"/>
<evidence type="ECO:0000305" key="2"/>
<name>MUCA_SALTM</name>
<sequence>MKVDIFESSGASRVHSIPFYLQRISAGFPSPAQGYEKQELNLHEYCVRHPSATYFLRVSGSSMEDGRIHDGDVLVVDRSLTASHGSIVVACIHNEFTVKRLLLRPRPCLMPMNKDFPVYYIDPDNESVEIWGVVTHSLIEHPVCLR</sequence>
<protein>
    <recommendedName>
        <fullName>Protein MucA</fullName>
        <ecNumber>3.4.21.-</ecNumber>
    </recommendedName>
    <component>
        <recommendedName>
            <fullName>Protein MucA'</fullName>
        </recommendedName>
    </component>
</protein>
<comment type="function">
    <text evidence="1">Involved in UV protection and mutation.</text>
</comment>
<comment type="miscellaneous">
    <text>The mucAB operon is the plasmid-borne analog of the E.coli umuDC operon.</text>
</comment>
<comment type="similarity">
    <text evidence="2">Belongs to the peptidase S24 family.</text>
</comment>
<dbReference type="EC" id="3.4.21.-"/>
<dbReference type="EMBL" id="X16596">
    <property type="protein sequence ID" value="CAA34606.1"/>
    <property type="molecule type" value="Genomic_DNA"/>
</dbReference>
<dbReference type="PIR" id="S06775">
    <property type="entry name" value="S06775"/>
</dbReference>
<dbReference type="RefSeq" id="NP_511216.1">
    <property type="nucleotide sequence ID" value="NC_003292.1"/>
</dbReference>
<dbReference type="RefSeq" id="WP_000861760.1">
    <property type="nucleotide sequence ID" value="NZ_RQPP01000027.1"/>
</dbReference>
<dbReference type="SMR" id="P0A275"/>
<dbReference type="MEROPS" id="S24.003"/>
<dbReference type="GeneID" id="83649171"/>
<dbReference type="PRO" id="PR:P0A275"/>
<dbReference type="GO" id="GO:0003677">
    <property type="term" value="F:DNA binding"/>
    <property type="evidence" value="ECO:0007669"/>
    <property type="project" value="InterPro"/>
</dbReference>
<dbReference type="GO" id="GO:0008236">
    <property type="term" value="F:serine-type peptidase activity"/>
    <property type="evidence" value="ECO:0007669"/>
    <property type="project" value="UniProtKB-KW"/>
</dbReference>
<dbReference type="GO" id="GO:0006281">
    <property type="term" value="P:DNA repair"/>
    <property type="evidence" value="ECO:0007669"/>
    <property type="project" value="UniProtKB-KW"/>
</dbReference>
<dbReference type="GO" id="GO:0006508">
    <property type="term" value="P:proteolysis"/>
    <property type="evidence" value="ECO:0007669"/>
    <property type="project" value="UniProtKB-KW"/>
</dbReference>
<dbReference type="GO" id="GO:0006355">
    <property type="term" value="P:regulation of DNA-templated transcription"/>
    <property type="evidence" value="ECO:0007669"/>
    <property type="project" value="InterPro"/>
</dbReference>
<dbReference type="GO" id="GO:0009432">
    <property type="term" value="P:SOS response"/>
    <property type="evidence" value="ECO:0007669"/>
    <property type="project" value="UniProtKB-KW"/>
</dbReference>
<dbReference type="CDD" id="cd06529">
    <property type="entry name" value="S24_LexA-like"/>
    <property type="match status" value="1"/>
</dbReference>
<dbReference type="Gene3D" id="2.10.109.10">
    <property type="entry name" value="Umud Fragment, subunit A"/>
    <property type="match status" value="1"/>
</dbReference>
<dbReference type="InterPro" id="IPR039418">
    <property type="entry name" value="LexA-like"/>
</dbReference>
<dbReference type="InterPro" id="IPR036286">
    <property type="entry name" value="LexA/Signal_pep-like_sf"/>
</dbReference>
<dbReference type="InterPro" id="IPR050077">
    <property type="entry name" value="LexA_repressor"/>
</dbReference>
<dbReference type="InterPro" id="IPR006197">
    <property type="entry name" value="Peptidase_S24_LexA"/>
</dbReference>
<dbReference type="InterPro" id="IPR015927">
    <property type="entry name" value="Peptidase_S24_S26A/B/C"/>
</dbReference>
<dbReference type="NCBIfam" id="NF007621">
    <property type="entry name" value="PRK10276.1"/>
    <property type="match status" value="1"/>
</dbReference>
<dbReference type="PANTHER" id="PTHR33516">
    <property type="entry name" value="LEXA REPRESSOR"/>
    <property type="match status" value="1"/>
</dbReference>
<dbReference type="PANTHER" id="PTHR33516:SF2">
    <property type="entry name" value="LEXA REPRESSOR-RELATED"/>
    <property type="match status" value="1"/>
</dbReference>
<dbReference type="Pfam" id="PF00717">
    <property type="entry name" value="Peptidase_S24"/>
    <property type="match status" value="1"/>
</dbReference>
<dbReference type="PRINTS" id="PR00726">
    <property type="entry name" value="LEXASERPTASE"/>
</dbReference>
<dbReference type="SUPFAM" id="SSF51306">
    <property type="entry name" value="LexA/Signal peptidase"/>
    <property type="match status" value="1"/>
</dbReference>